<comment type="function">
    <text evidence="1">Forms part of the ribosomal stalk which helps the ribosome interact with GTP-bound translation factors.</text>
</comment>
<comment type="subunit">
    <text evidence="1">Part of the ribosomal stalk of the 50S ribosomal subunit. Interacts with L10 and the large rRNA to form the base of the stalk. L10 forms an elongated spine to which L12 dimers bind in a sequential fashion forming a multimeric L10(L12)X complex.</text>
</comment>
<comment type="PTM">
    <text evidence="1">One or more lysine residues are methylated.</text>
</comment>
<comment type="similarity">
    <text evidence="1">Belongs to the universal ribosomal protein uL11 family.</text>
</comment>
<dbReference type="EMBL" id="CP000783">
    <property type="protein sequence ID" value="ABU78900.1"/>
    <property type="molecule type" value="Genomic_DNA"/>
</dbReference>
<dbReference type="RefSeq" id="WP_004387082.1">
    <property type="nucleotide sequence ID" value="NC_009778.1"/>
</dbReference>
<dbReference type="SMR" id="A7MQQ0"/>
<dbReference type="GeneID" id="92214721"/>
<dbReference type="KEGG" id="esa:ESA_03696"/>
<dbReference type="HOGENOM" id="CLU_074237_2_0_6"/>
<dbReference type="Proteomes" id="UP000000260">
    <property type="component" value="Chromosome"/>
</dbReference>
<dbReference type="GO" id="GO:0022625">
    <property type="term" value="C:cytosolic large ribosomal subunit"/>
    <property type="evidence" value="ECO:0007669"/>
    <property type="project" value="TreeGrafter"/>
</dbReference>
<dbReference type="GO" id="GO:0070180">
    <property type="term" value="F:large ribosomal subunit rRNA binding"/>
    <property type="evidence" value="ECO:0007669"/>
    <property type="project" value="UniProtKB-UniRule"/>
</dbReference>
<dbReference type="GO" id="GO:0003735">
    <property type="term" value="F:structural constituent of ribosome"/>
    <property type="evidence" value="ECO:0007669"/>
    <property type="project" value="InterPro"/>
</dbReference>
<dbReference type="GO" id="GO:0006412">
    <property type="term" value="P:translation"/>
    <property type="evidence" value="ECO:0007669"/>
    <property type="project" value="UniProtKB-UniRule"/>
</dbReference>
<dbReference type="CDD" id="cd00349">
    <property type="entry name" value="Ribosomal_L11"/>
    <property type="match status" value="1"/>
</dbReference>
<dbReference type="FunFam" id="1.10.10.250:FF:000001">
    <property type="entry name" value="50S ribosomal protein L11"/>
    <property type="match status" value="1"/>
</dbReference>
<dbReference type="FunFam" id="3.30.1550.10:FF:000001">
    <property type="entry name" value="50S ribosomal protein L11"/>
    <property type="match status" value="1"/>
</dbReference>
<dbReference type="Gene3D" id="1.10.10.250">
    <property type="entry name" value="Ribosomal protein L11, C-terminal domain"/>
    <property type="match status" value="1"/>
</dbReference>
<dbReference type="Gene3D" id="3.30.1550.10">
    <property type="entry name" value="Ribosomal protein L11/L12, N-terminal domain"/>
    <property type="match status" value="1"/>
</dbReference>
<dbReference type="HAMAP" id="MF_00736">
    <property type="entry name" value="Ribosomal_uL11"/>
    <property type="match status" value="1"/>
</dbReference>
<dbReference type="InterPro" id="IPR000911">
    <property type="entry name" value="Ribosomal_uL11"/>
</dbReference>
<dbReference type="InterPro" id="IPR006519">
    <property type="entry name" value="Ribosomal_uL11_bac-typ"/>
</dbReference>
<dbReference type="InterPro" id="IPR020783">
    <property type="entry name" value="Ribosomal_uL11_C"/>
</dbReference>
<dbReference type="InterPro" id="IPR036769">
    <property type="entry name" value="Ribosomal_uL11_C_sf"/>
</dbReference>
<dbReference type="InterPro" id="IPR020785">
    <property type="entry name" value="Ribosomal_uL11_CS"/>
</dbReference>
<dbReference type="InterPro" id="IPR020784">
    <property type="entry name" value="Ribosomal_uL11_N"/>
</dbReference>
<dbReference type="InterPro" id="IPR036796">
    <property type="entry name" value="Ribosomal_uL11_N_sf"/>
</dbReference>
<dbReference type="NCBIfam" id="TIGR01632">
    <property type="entry name" value="L11_bact"/>
    <property type="match status" value="1"/>
</dbReference>
<dbReference type="PANTHER" id="PTHR11661">
    <property type="entry name" value="60S RIBOSOMAL PROTEIN L12"/>
    <property type="match status" value="1"/>
</dbReference>
<dbReference type="PANTHER" id="PTHR11661:SF1">
    <property type="entry name" value="LARGE RIBOSOMAL SUBUNIT PROTEIN UL11M"/>
    <property type="match status" value="1"/>
</dbReference>
<dbReference type="Pfam" id="PF00298">
    <property type="entry name" value="Ribosomal_L11"/>
    <property type="match status" value="1"/>
</dbReference>
<dbReference type="Pfam" id="PF03946">
    <property type="entry name" value="Ribosomal_L11_N"/>
    <property type="match status" value="1"/>
</dbReference>
<dbReference type="SMART" id="SM00649">
    <property type="entry name" value="RL11"/>
    <property type="match status" value="1"/>
</dbReference>
<dbReference type="SUPFAM" id="SSF54747">
    <property type="entry name" value="Ribosomal L11/L12e N-terminal domain"/>
    <property type="match status" value="1"/>
</dbReference>
<dbReference type="SUPFAM" id="SSF46906">
    <property type="entry name" value="Ribosomal protein L11, C-terminal domain"/>
    <property type="match status" value="1"/>
</dbReference>
<dbReference type="PROSITE" id="PS00359">
    <property type="entry name" value="RIBOSOMAL_L11"/>
    <property type="match status" value="1"/>
</dbReference>
<reference key="1">
    <citation type="journal article" date="2010" name="PLoS ONE">
        <title>Genome sequence of Cronobacter sakazakii BAA-894 and comparative genomic hybridization analysis with other Cronobacter species.</title>
        <authorList>
            <person name="Kucerova E."/>
            <person name="Clifton S.W."/>
            <person name="Xia X.Q."/>
            <person name="Long F."/>
            <person name="Porwollik S."/>
            <person name="Fulton L."/>
            <person name="Fronick C."/>
            <person name="Minx P."/>
            <person name="Kyung K."/>
            <person name="Warren W."/>
            <person name="Fulton R."/>
            <person name="Feng D."/>
            <person name="Wollam A."/>
            <person name="Shah N."/>
            <person name="Bhonagiri V."/>
            <person name="Nash W.E."/>
            <person name="Hallsworth-Pepin K."/>
            <person name="Wilson R.K."/>
            <person name="McClelland M."/>
            <person name="Forsythe S.J."/>
        </authorList>
    </citation>
    <scope>NUCLEOTIDE SEQUENCE [LARGE SCALE GENOMIC DNA]</scope>
    <source>
        <strain>ATCC BAA-894</strain>
    </source>
</reference>
<gene>
    <name evidence="1" type="primary">rplK</name>
    <name type="ordered locus">ESA_03696</name>
</gene>
<protein>
    <recommendedName>
        <fullName evidence="1">Large ribosomal subunit protein uL11</fullName>
    </recommendedName>
    <alternativeName>
        <fullName evidence="2">50S ribosomal protein L11</fullName>
    </alternativeName>
</protein>
<proteinExistence type="inferred from homology"/>
<accession>A7MQQ0</accession>
<keyword id="KW-0488">Methylation</keyword>
<keyword id="KW-1185">Reference proteome</keyword>
<keyword id="KW-0687">Ribonucleoprotein</keyword>
<keyword id="KW-0689">Ribosomal protein</keyword>
<keyword id="KW-0694">RNA-binding</keyword>
<keyword id="KW-0699">rRNA-binding</keyword>
<evidence type="ECO:0000255" key="1">
    <source>
        <dbReference type="HAMAP-Rule" id="MF_00736"/>
    </source>
</evidence>
<evidence type="ECO:0000305" key="2"/>
<organism>
    <name type="scientific">Cronobacter sakazakii (strain ATCC BAA-894)</name>
    <name type="common">Enterobacter sakazakii</name>
    <dbReference type="NCBI Taxonomy" id="290339"/>
    <lineage>
        <taxon>Bacteria</taxon>
        <taxon>Pseudomonadati</taxon>
        <taxon>Pseudomonadota</taxon>
        <taxon>Gammaproteobacteria</taxon>
        <taxon>Enterobacterales</taxon>
        <taxon>Enterobacteriaceae</taxon>
        <taxon>Cronobacter</taxon>
    </lineage>
</organism>
<feature type="chain" id="PRO_1000046175" description="Large ribosomal subunit protein uL11">
    <location>
        <begin position="1"/>
        <end position="142"/>
    </location>
</feature>
<name>RL11_CROS8</name>
<sequence length="142" mass="14880">MAKKVQAYVKLQVAAGMANPSPPVGPALGQQGVNIMEFCKAFNAKTDSMEKGLPIPVVITVYADRSFTFVTKTPPAAVLLKKAAGIKSGSGKPNKDKVGTITRAQLQEIAQTKAADMTGADIEAMTRSIEGTARSMGLVVED</sequence>